<gene>
    <name evidence="10" type="primary">Ccn6</name>
    <name evidence="8" type="synonym">Wisp3</name>
</gene>
<proteinExistence type="inferred from homology"/>
<comment type="function">
    <text evidence="2">Plays a role in mitochondrial electron transport and mitochondrial respiration.</text>
</comment>
<comment type="subcellular location">
    <subcellularLocation>
        <location evidence="2">Secreted</location>
    </subcellularLocation>
    <subcellularLocation>
        <location evidence="2">Mitochondrion</location>
    </subcellularLocation>
    <text evidence="2">Associated with membranes.</text>
</comment>
<comment type="disruption phenotype">
    <text evidence="7">Deficient mice are viable and fertile with no obvious abnormalities in size, weight, skeletal development, ossification, or the occurrence of joint disease.</text>
</comment>
<comment type="similarity">
    <text evidence="9">Belongs to the CCN family.</text>
</comment>
<organism>
    <name type="scientific">Mus musculus</name>
    <name type="common">Mouse</name>
    <dbReference type="NCBI Taxonomy" id="10090"/>
    <lineage>
        <taxon>Eukaryota</taxon>
        <taxon>Metazoa</taxon>
        <taxon>Chordata</taxon>
        <taxon>Craniata</taxon>
        <taxon>Vertebrata</taxon>
        <taxon>Euteleostomi</taxon>
        <taxon>Mammalia</taxon>
        <taxon>Eutheria</taxon>
        <taxon>Euarchontoglires</taxon>
        <taxon>Glires</taxon>
        <taxon>Rodentia</taxon>
        <taxon>Myomorpha</taxon>
        <taxon>Muroidea</taxon>
        <taxon>Muridae</taxon>
        <taxon>Murinae</taxon>
        <taxon>Mus</taxon>
        <taxon>Mus</taxon>
    </lineage>
</organism>
<dbReference type="EMBL" id="AC153958">
    <property type="status" value="NOT_ANNOTATED_CDS"/>
    <property type="molecule type" value="Genomic_DNA"/>
</dbReference>
<dbReference type="CCDS" id="CCDS48537.1"/>
<dbReference type="RefSeq" id="NP_001120848.1">
    <property type="nucleotide sequence ID" value="NM_001127376.1"/>
</dbReference>
<dbReference type="RefSeq" id="XP_030100987.1">
    <property type="nucleotide sequence ID" value="XM_030245127.2"/>
</dbReference>
<dbReference type="RefSeq" id="XP_036011714.1">
    <property type="nucleotide sequence ID" value="XM_036155821.1"/>
</dbReference>
<dbReference type="RefSeq" id="XP_036011715.1">
    <property type="nucleotide sequence ID" value="XM_036155822.1"/>
</dbReference>
<dbReference type="SMR" id="D3Z5L9"/>
<dbReference type="FunCoup" id="D3Z5L9">
    <property type="interactions" value="104"/>
</dbReference>
<dbReference type="STRING" id="10090.ENSMUSP00000076003"/>
<dbReference type="GlyCosmos" id="D3Z5L9">
    <property type="glycosylation" value="1 site, No reported glycans"/>
</dbReference>
<dbReference type="GlyGen" id="D3Z5L9">
    <property type="glycosylation" value="2 sites"/>
</dbReference>
<dbReference type="iPTMnet" id="D3Z5L9"/>
<dbReference type="PhosphoSitePlus" id="D3Z5L9"/>
<dbReference type="PaxDb" id="10090-ENSMUSP00000076003"/>
<dbReference type="PeptideAtlas" id="D3Z5L9"/>
<dbReference type="Antibodypedia" id="32438">
    <property type="antibodies" value="183 antibodies from 25 providers"/>
</dbReference>
<dbReference type="DNASU" id="327743"/>
<dbReference type="Ensembl" id="ENSMUST00000076713.6">
    <property type="protein sequence ID" value="ENSMUSP00000076003.5"/>
    <property type="gene ID" value="ENSMUSG00000062074.8"/>
</dbReference>
<dbReference type="GeneID" id="327743"/>
<dbReference type="KEGG" id="mmu:327743"/>
<dbReference type="UCSC" id="uc011xcu.1">
    <property type="organism name" value="mouse"/>
</dbReference>
<dbReference type="AGR" id="MGI:2685581"/>
<dbReference type="CTD" id="8838"/>
<dbReference type="MGI" id="MGI:2685581">
    <property type="gene designation" value="Ccn6"/>
</dbReference>
<dbReference type="VEuPathDB" id="HostDB:ENSMUSG00000062074"/>
<dbReference type="eggNOG" id="ENOG502QW30">
    <property type="taxonomic scope" value="Eukaryota"/>
</dbReference>
<dbReference type="GeneTree" id="ENSGT00940000160119"/>
<dbReference type="HOGENOM" id="CLU_063247_2_0_1"/>
<dbReference type="InParanoid" id="D3Z5L9"/>
<dbReference type="OMA" id="ERCNERD"/>
<dbReference type="OrthoDB" id="365605at2759"/>
<dbReference type="PhylomeDB" id="D3Z5L9"/>
<dbReference type="TreeFam" id="TF326070"/>
<dbReference type="BioGRID-ORCS" id="327743">
    <property type="hits" value="4 hits in 79 CRISPR screens"/>
</dbReference>
<dbReference type="PRO" id="PR:D3Z5L9"/>
<dbReference type="Proteomes" id="UP000000589">
    <property type="component" value="Chromosome 10"/>
</dbReference>
<dbReference type="RNAct" id="D3Z5L9">
    <property type="molecule type" value="protein"/>
</dbReference>
<dbReference type="Bgee" id="ENSMUSG00000062074">
    <property type="expression patterns" value="Expressed in secondary oocyte and 41 other cell types or tissues"/>
</dbReference>
<dbReference type="GO" id="GO:0005615">
    <property type="term" value="C:extracellular space"/>
    <property type="evidence" value="ECO:0000250"/>
    <property type="project" value="UniProtKB"/>
</dbReference>
<dbReference type="GO" id="GO:0005739">
    <property type="term" value="C:mitochondrion"/>
    <property type="evidence" value="ECO:0000250"/>
    <property type="project" value="UniProtKB"/>
</dbReference>
<dbReference type="GO" id="GO:0008083">
    <property type="term" value="F:growth factor activity"/>
    <property type="evidence" value="ECO:0007669"/>
    <property type="project" value="UniProtKB-KW"/>
</dbReference>
<dbReference type="GO" id="GO:0016525">
    <property type="term" value="P:negative regulation of angiogenesis"/>
    <property type="evidence" value="ECO:0000266"/>
    <property type="project" value="MGI"/>
</dbReference>
<dbReference type="GO" id="GO:0008285">
    <property type="term" value="P:negative regulation of cell population proliferation"/>
    <property type="evidence" value="ECO:0000266"/>
    <property type="project" value="MGI"/>
</dbReference>
<dbReference type="GO" id="GO:0051881">
    <property type="term" value="P:regulation of mitochondrial membrane potential"/>
    <property type="evidence" value="ECO:0000250"/>
    <property type="project" value="UniProtKB"/>
</dbReference>
<dbReference type="GO" id="GO:1903426">
    <property type="term" value="P:regulation of reactive oxygen species biosynthetic process"/>
    <property type="evidence" value="ECO:0000250"/>
    <property type="project" value="UniProtKB"/>
</dbReference>
<dbReference type="FunFam" id="2.10.70.10:FF:000081">
    <property type="entry name" value="Cellular communication network factor 6"/>
    <property type="match status" value="1"/>
</dbReference>
<dbReference type="FunFam" id="2.20.100.10:FF:000065">
    <property type="entry name" value="Cellular communication network factor 6"/>
    <property type="match status" value="1"/>
</dbReference>
<dbReference type="Gene3D" id="2.20.100.10">
    <property type="entry name" value="Thrombospondin type-1 (TSP1) repeat"/>
    <property type="match status" value="1"/>
</dbReference>
<dbReference type="InterPro" id="IPR050941">
    <property type="entry name" value="CCN"/>
</dbReference>
<dbReference type="InterPro" id="IPR006207">
    <property type="entry name" value="Cys_knot_C"/>
</dbReference>
<dbReference type="InterPro" id="IPR006208">
    <property type="entry name" value="Glyco_hormone_CN"/>
</dbReference>
<dbReference type="InterPro" id="IPR009030">
    <property type="entry name" value="Growth_fac_rcpt_cys_sf"/>
</dbReference>
<dbReference type="InterPro" id="IPR000867">
    <property type="entry name" value="IGFBP-like"/>
</dbReference>
<dbReference type="InterPro" id="IPR012395">
    <property type="entry name" value="IGFBP_CNN"/>
</dbReference>
<dbReference type="InterPro" id="IPR017891">
    <property type="entry name" value="Insulin_GF-bd_Cys-rich_CS"/>
</dbReference>
<dbReference type="InterPro" id="IPR043973">
    <property type="entry name" value="TSP1_CCN"/>
</dbReference>
<dbReference type="InterPro" id="IPR000884">
    <property type="entry name" value="TSP1_rpt"/>
</dbReference>
<dbReference type="InterPro" id="IPR036383">
    <property type="entry name" value="TSP1_rpt_sf"/>
</dbReference>
<dbReference type="PANTHER" id="PTHR11348:SF3">
    <property type="entry name" value="CELLULAR COMMUNICATION NETWORK FACTOR 6"/>
    <property type="match status" value="1"/>
</dbReference>
<dbReference type="PANTHER" id="PTHR11348">
    <property type="entry name" value="CONNECTIVE TISSUE GROWTH FACTOR-RELATED"/>
    <property type="match status" value="1"/>
</dbReference>
<dbReference type="Pfam" id="PF00007">
    <property type="entry name" value="Cys_knot"/>
    <property type="match status" value="1"/>
</dbReference>
<dbReference type="Pfam" id="PF00219">
    <property type="entry name" value="IGFBP"/>
    <property type="match status" value="1"/>
</dbReference>
<dbReference type="Pfam" id="PF19035">
    <property type="entry name" value="TSP1_CCN"/>
    <property type="match status" value="1"/>
</dbReference>
<dbReference type="PIRSF" id="PIRSF036495">
    <property type="entry name" value="IGFBP_rP_CNN"/>
    <property type="match status" value="1"/>
</dbReference>
<dbReference type="SMART" id="SM00041">
    <property type="entry name" value="CT"/>
    <property type="match status" value="1"/>
</dbReference>
<dbReference type="SMART" id="SM00121">
    <property type="entry name" value="IB"/>
    <property type="match status" value="1"/>
</dbReference>
<dbReference type="SMART" id="SM00209">
    <property type="entry name" value="TSP1"/>
    <property type="match status" value="1"/>
</dbReference>
<dbReference type="SUPFAM" id="SSF57184">
    <property type="entry name" value="Growth factor receptor domain"/>
    <property type="match status" value="1"/>
</dbReference>
<dbReference type="SUPFAM" id="SSF82895">
    <property type="entry name" value="TSP-1 type 1 repeat"/>
    <property type="match status" value="1"/>
</dbReference>
<dbReference type="PROSITE" id="PS01225">
    <property type="entry name" value="CTCK_2"/>
    <property type="match status" value="1"/>
</dbReference>
<dbReference type="PROSITE" id="PS00222">
    <property type="entry name" value="IGFBP_N_1"/>
    <property type="match status" value="1"/>
</dbReference>
<dbReference type="PROSITE" id="PS51323">
    <property type="entry name" value="IGFBP_N_2"/>
    <property type="match status" value="1"/>
</dbReference>
<dbReference type="PROSITE" id="PS50092">
    <property type="entry name" value="TSP1"/>
    <property type="match status" value="1"/>
</dbReference>
<protein>
    <recommendedName>
        <fullName>Cellular communication network factor 6</fullName>
    </recommendedName>
    <alternativeName>
        <fullName>CCN family member 6</fullName>
    </alternativeName>
    <alternativeName>
        <fullName evidence="8">WNT1-inducible-signaling pathway protein 3</fullName>
        <shortName evidence="8">WISP-3</shortName>
    </alternativeName>
</protein>
<keyword id="KW-1015">Disulfide bond</keyword>
<keyword id="KW-0325">Glycoprotein</keyword>
<keyword id="KW-0339">Growth factor</keyword>
<keyword id="KW-0496">Mitochondrion</keyword>
<keyword id="KW-1185">Reference proteome</keyword>
<keyword id="KW-0964">Secreted</keyword>
<keyword id="KW-0732">Signal</keyword>
<evidence type="ECO:0000250" key="1"/>
<evidence type="ECO:0000250" key="2">
    <source>
        <dbReference type="UniProtKB" id="O95389"/>
    </source>
</evidence>
<evidence type="ECO:0000255" key="3"/>
<evidence type="ECO:0000255" key="4">
    <source>
        <dbReference type="PROSITE-ProRule" id="PRU00039"/>
    </source>
</evidence>
<evidence type="ECO:0000255" key="5">
    <source>
        <dbReference type="PROSITE-ProRule" id="PRU00210"/>
    </source>
</evidence>
<evidence type="ECO:0000255" key="6">
    <source>
        <dbReference type="PROSITE-ProRule" id="PRU00653"/>
    </source>
</evidence>
<evidence type="ECO:0000269" key="7">
    <source>
    </source>
</evidence>
<evidence type="ECO:0000303" key="8">
    <source>
    </source>
</evidence>
<evidence type="ECO:0000305" key="9"/>
<evidence type="ECO:0000312" key="10">
    <source>
        <dbReference type="MGI" id="MGI:2685581"/>
    </source>
</evidence>
<accession>D3Z5L9</accession>
<sequence>MRRLLFCTLLMTGLTQLCCRTQGSAPQDSTPGGRPGAALEVYQRTEVCRWPCRCPPQRPTCPPGVSLVRDGCGCCKVCAKQPGDTCNEAEICDPHKGLYCDYSGDTPRYETGVCAYLVAVGCEFNRVYYQNGQVFQPHPLFSCLCVSGAIGCTPLFIPKLAGSNCSAAKGRRKTDPPNCGRGTLQQQNSASYKTMSAYRNLPLTWRKKCLVQATKWTPCSRTCGMGISNRVTNDNANCEMRKERRLCYIQPCSRNTSQAVKIPRGETCQPTFQLPKAEKFVFSGCSSTQSYRPTFCGICLDKRCCVPNKSKMITVRFDCPSEGSFKWQMLWVTSCVCQRDCREPGDIFSELRIL</sequence>
<name>CCN6_MOUSE</name>
<feature type="signal peptide" evidence="3">
    <location>
        <begin position="1"/>
        <end position="23"/>
    </location>
</feature>
<feature type="chain" id="PRO_0000415855" description="Cellular communication network factor 6" evidence="1">
    <location>
        <begin position="24"/>
        <end position="354"/>
    </location>
</feature>
<feature type="domain" description="IGFBP N-terminal" evidence="6">
    <location>
        <begin position="44"/>
        <end position="117"/>
    </location>
</feature>
<feature type="domain" description="TSP type-1" evidence="5">
    <location>
        <begin position="208"/>
        <end position="253"/>
    </location>
</feature>
<feature type="domain" description="CTCK" evidence="4">
    <location>
        <begin position="268"/>
        <end position="342"/>
    </location>
</feature>
<feature type="glycosylation site" description="N-linked (GlcNAc...) asparagine" evidence="3">
    <location>
        <position position="308"/>
    </location>
</feature>
<feature type="disulfide bond" evidence="6">
    <location>
        <begin position="48"/>
        <end position="72"/>
    </location>
</feature>
<feature type="disulfide bond" evidence="6">
    <location>
        <begin position="52"/>
        <end position="74"/>
    </location>
</feature>
<feature type="disulfide bond" evidence="6">
    <location>
        <begin position="54"/>
        <end position="75"/>
    </location>
</feature>
<feature type="disulfide bond" evidence="6">
    <location>
        <begin position="61"/>
        <end position="78"/>
    </location>
</feature>
<feature type="disulfide bond" evidence="6">
    <location>
        <begin position="86"/>
        <end position="100"/>
    </location>
</feature>
<feature type="disulfide bond" evidence="6">
    <location>
        <begin position="92"/>
        <end position="114"/>
    </location>
</feature>
<feature type="disulfide bond" evidence="1">
    <location>
        <begin position="209"/>
        <end position="238"/>
    </location>
</feature>
<feature type="disulfide bond" evidence="1">
    <location>
        <begin position="219"/>
        <end position="223"/>
    </location>
</feature>
<feature type="disulfide bond" evidence="1">
    <location>
        <begin position="247"/>
        <end position="252"/>
    </location>
</feature>
<feature type="disulfide bond" evidence="1">
    <location>
        <begin position="268"/>
        <end position="305"/>
    </location>
</feature>
<feature type="disulfide bond" evidence="1">
    <location>
        <begin position="285"/>
        <end position="319"/>
    </location>
</feature>
<feature type="disulfide bond" evidence="1">
    <location>
        <begin position="296"/>
        <end position="335"/>
    </location>
</feature>
<feature type="disulfide bond" evidence="1">
    <location>
        <begin position="299"/>
        <end position="337"/>
    </location>
</feature>
<reference key="1">
    <citation type="journal article" date="2009" name="PLoS Biol.">
        <title>Lineage-specific biology revealed by a finished genome assembly of the mouse.</title>
        <authorList>
            <person name="Church D.M."/>
            <person name="Goodstadt L."/>
            <person name="Hillier L.W."/>
            <person name="Zody M.C."/>
            <person name="Goldstein S."/>
            <person name="She X."/>
            <person name="Bult C.J."/>
            <person name="Agarwala R."/>
            <person name="Cherry J.L."/>
            <person name="DiCuccio M."/>
            <person name="Hlavina W."/>
            <person name="Kapustin Y."/>
            <person name="Meric P."/>
            <person name="Maglott D."/>
            <person name="Birtle Z."/>
            <person name="Marques A.C."/>
            <person name="Graves T."/>
            <person name="Zhou S."/>
            <person name="Teague B."/>
            <person name="Potamousis K."/>
            <person name="Churas C."/>
            <person name="Place M."/>
            <person name="Herschleb J."/>
            <person name="Runnheim R."/>
            <person name="Forrest D."/>
            <person name="Amos-Landgraf J."/>
            <person name="Schwartz D.C."/>
            <person name="Cheng Z."/>
            <person name="Lindblad-Toh K."/>
            <person name="Eichler E.E."/>
            <person name="Ponting C.P."/>
        </authorList>
    </citation>
    <scope>NUCLEOTIDE SEQUENCE [LARGE SCALE GENOMIC DNA]</scope>
    <source>
        <strain>C57BL/6J</strain>
    </source>
</reference>
<reference key="2">
    <citation type="journal article" date="2005" name="Mol. Cell. Biol.">
        <title>WISP3, the gene responsible for the human skeletal disease progressive pseudorheumatoid dysplasia, is not essential for skeletal function in mice.</title>
        <authorList>
            <person name="Kutz W.E."/>
            <person name="Gong Y."/>
            <person name="Warman M.L."/>
        </authorList>
    </citation>
    <scope>DISRUPTION PHENOTYPE</scope>
</reference>